<gene>
    <name evidence="1" type="primary">hfq</name>
    <name type="ordered locus">SeHA_C4779</name>
</gene>
<dbReference type="EMBL" id="CP001120">
    <property type="protein sequence ID" value="ACF68141.1"/>
    <property type="molecule type" value="Genomic_DNA"/>
</dbReference>
<dbReference type="RefSeq" id="WP_001051892.1">
    <property type="nucleotide sequence ID" value="NC_011083.1"/>
</dbReference>
<dbReference type="SMR" id="B4TFA6"/>
<dbReference type="KEGG" id="seh:SeHA_C4779"/>
<dbReference type="HOGENOM" id="CLU_113688_2_1_6"/>
<dbReference type="Proteomes" id="UP000001866">
    <property type="component" value="Chromosome"/>
</dbReference>
<dbReference type="GO" id="GO:0005829">
    <property type="term" value="C:cytosol"/>
    <property type="evidence" value="ECO:0007669"/>
    <property type="project" value="TreeGrafter"/>
</dbReference>
<dbReference type="GO" id="GO:0003723">
    <property type="term" value="F:RNA binding"/>
    <property type="evidence" value="ECO:0007669"/>
    <property type="project" value="UniProtKB-UniRule"/>
</dbReference>
<dbReference type="GO" id="GO:0006355">
    <property type="term" value="P:regulation of DNA-templated transcription"/>
    <property type="evidence" value="ECO:0007669"/>
    <property type="project" value="InterPro"/>
</dbReference>
<dbReference type="GO" id="GO:0043487">
    <property type="term" value="P:regulation of RNA stability"/>
    <property type="evidence" value="ECO:0007669"/>
    <property type="project" value="TreeGrafter"/>
</dbReference>
<dbReference type="GO" id="GO:0045974">
    <property type="term" value="P:regulation of translation, ncRNA-mediated"/>
    <property type="evidence" value="ECO:0007669"/>
    <property type="project" value="TreeGrafter"/>
</dbReference>
<dbReference type="CDD" id="cd01716">
    <property type="entry name" value="Hfq"/>
    <property type="match status" value="1"/>
</dbReference>
<dbReference type="FunFam" id="2.30.30.100:FF:000001">
    <property type="entry name" value="RNA-binding protein Hfq"/>
    <property type="match status" value="1"/>
</dbReference>
<dbReference type="Gene3D" id="2.30.30.100">
    <property type="match status" value="1"/>
</dbReference>
<dbReference type="HAMAP" id="MF_00436">
    <property type="entry name" value="Hfq"/>
    <property type="match status" value="1"/>
</dbReference>
<dbReference type="InterPro" id="IPR005001">
    <property type="entry name" value="Hfq"/>
</dbReference>
<dbReference type="InterPro" id="IPR010920">
    <property type="entry name" value="LSM_dom_sf"/>
</dbReference>
<dbReference type="InterPro" id="IPR047575">
    <property type="entry name" value="Sm"/>
</dbReference>
<dbReference type="NCBIfam" id="TIGR02383">
    <property type="entry name" value="Hfq"/>
    <property type="match status" value="1"/>
</dbReference>
<dbReference type="NCBIfam" id="NF001602">
    <property type="entry name" value="PRK00395.1"/>
    <property type="match status" value="1"/>
</dbReference>
<dbReference type="PANTHER" id="PTHR34772">
    <property type="entry name" value="RNA-BINDING PROTEIN HFQ"/>
    <property type="match status" value="1"/>
</dbReference>
<dbReference type="PANTHER" id="PTHR34772:SF1">
    <property type="entry name" value="RNA-BINDING PROTEIN HFQ"/>
    <property type="match status" value="1"/>
</dbReference>
<dbReference type="Pfam" id="PF17209">
    <property type="entry name" value="Hfq"/>
    <property type="match status" value="1"/>
</dbReference>
<dbReference type="SUPFAM" id="SSF50182">
    <property type="entry name" value="Sm-like ribonucleoproteins"/>
    <property type="match status" value="1"/>
</dbReference>
<dbReference type="PROSITE" id="PS52002">
    <property type="entry name" value="SM"/>
    <property type="match status" value="1"/>
</dbReference>
<keyword id="KW-0694">RNA-binding</keyword>
<keyword id="KW-0346">Stress response</keyword>
<reference key="1">
    <citation type="journal article" date="2011" name="J. Bacteriol.">
        <title>Comparative genomics of 28 Salmonella enterica isolates: evidence for CRISPR-mediated adaptive sublineage evolution.</title>
        <authorList>
            <person name="Fricke W.F."/>
            <person name="Mammel M.K."/>
            <person name="McDermott P.F."/>
            <person name="Tartera C."/>
            <person name="White D.G."/>
            <person name="Leclerc J.E."/>
            <person name="Ravel J."/>
            <person name="Cebula T.A."/>
        </authorList>
    </citation>
    <scope>NUCLEOTIDE SEQUENCE [LARGE SCALE GENOMIC DNA]</scope>
    <source>
        <strain>SL476</strain>
    </source>
</reference>
<evidence type="ECO:0000255" key="1">
    <source>
        <dbReference type="HAMAP-Rule" id="MF_00436"/>
    </source>
</evidence>
<evidence type="ECO:0000255" key="2">
    <source>
        <dbReference type="PROSITE-ProRule" id="PRU01346"/>
    </source>
</evidence>
<evidence type="ECO:0000256" key="3">
    <source>
        <dbReference type="SAM" id="MobiDB-lite"/>
    </source>
</evidence>
<comment type="function">
    <text evidence="1">RNA chaperone that binds small regulatory RNA (sRNAs) and mRNAs to facilitate mRNA translational regulation in response to envelope stress, environmental stress and changes in metabolite concentrations. Also binds with high specificity to tRNAs.</text>
</comment>
<comment type="subunit">
    <text evidence="1">Homohexamer.</text>
</comment>
<comment type="similarity">
    <text evidence="1">Belongs to the Hfq family.</text>
</comment>
<accession>B4TFA6</accession>
<protein>
    <recommendedName>
        <fullName evidence="1">RNA-binding protein Hfq</fullName>
    </recommendedName>
</protein>
<organism>
    <name type="scientific">Salmonella heidelberg (strain SL476)</name>
    <dbReference type="NCBI Taxonomy" id="454169"/>
    <lineage>
        <taxon>Bacteria</taxon>
        <taxon>Pseudomonadati</taxon>
        <taxon>Pseudomonadota</taxon>
        <taxon>Gammaproteobacteria</taxon>
        <taxon>Enterobacterales</taxon>
        <taxon>Enterobacteriaceae</taxon>
        <taxon>Salmonella</taxon>
    </lineage>
</organism>
<feature type="chain" id="PRO_1000190355" description="RNA-binding protein Hfq">
    <location>
        <begin position="1"/>
        <end position="102"/>
    </location>
</feature>
<feature type="domain" description="Sm" evidence="2">
    <location>
        <begin position="9"/>
        <end position="68"/>
    </location>
</feature>
<feature type="region of interest" description="Disordered" evidence="3">
    <location>
        <begin position="63"/>
        <end position="102"/>
    </location>
</feature>
<feature type="compositionally biased region" description="Low complexity" evidence="3">
    <location>
        <begin position="70"/>
        <end position="88"/>
    </location>
</feature>
<sequence length="102" mass="11119">MAKGQSLQDPFVNALRRERVPVSIYLVNGIKLQGQIESFDQFVILLKNTVSQMVYKHAISTVVPSRPVSHHSNNAGGGASNNYHHGSNAQGSTAQQDSEETE</sequence>
<name>HFQ_SALHS</name>
<proteinExistence type="inferred from homology"/>